<sequence>MSRMPRYKLTIEYDGAPFCGWQLQPALPSVQGALEAAALATCGEAVRVHGAGRTDAGVHALGQVAHVDIPKPFRADKLRDALNAHLRPNPVAVLAAEIVPDTFEARFSAVRRHYRYRIANRRSNLALDLGKVWRVPKPLDTDAMHRAAQVLIGKHNFTTFRDTECQAASPEKTLDVLDVIRDGDAVDIITNARSYLHSQVRSMVGSLVWVGEGRWTADDLAAALAARRRSACGPVAPPEGLYLMQVDY</sequence>
<organism>
    <name type="scientific">Rhodopseudomonas palustris (strain ATCC BAA-98 / CGA009)</name>
    <dbReference type="NCBI Taxonomy" id="258594"/>
    <lineage>
        <taxon>Bacteria</taxon>
        <taxon>Pseudomonadati</taxon>
        <taxon>Pseudomonadota</taxon>
        <taxon>Alphaproteobacteria</taxon>
        <taxon>Hyphomicrobiales</taxon>
        <taxon>Nitrobacteraceae</taxon>
        <taxon>Rhodopseudomonas</taxon>
    </lineage>
</organism>
<dbReference type="EC" id="5.4.99.12" evidence="1"/>
<dbReference type="EMBL" id="BX572594">
    <property type="protein sequence ID" value="CAE26067.1"/>
    <property type="molecule type" value="Genomic_DNA"/>
</dbReference>
<dbReference type="SMR" id="P60352"/>
<dbReference type="STRING" id="258594.RPA0623"/>
<dbReference type="eggNOG" id="COG0101">
    <property type="taxonomic scope" value="Bacteria"/>
</dbReference>
<dbReference type="HOGENOM" id="CLU_014673_0_2_5"/>
<dbReference type="PhylomeDB" id="P60352"/>
<dbReference type="GO" id="GO:0003723">
    <property type="term" value="F:RNA binding"/>
    <property type="evidence" value="ECO:0007669"/>
    <property type="project" value="InterPro"/>
</dbReference>
<dbReference type="GO" id="GO:0160147">
    <property type="term" value="F:tRNA pseudouridine(38-40) synthase activity"/>
    <property type="evidence" value="ECO:0007669"/>
    <property type="project" value="UniProtKB-EC"/>
</dbReference>
<dbReference type="GO" id="GO:0031119">
    <property type="term" value="P:tRNA pseudouridine synthesis"/>
    <property type="evidence" value="ECO:0007669"/>
    <property type="project" value="UniProtKB-UniRule"/>
</dbReference>
<dbReference type="CDD" id="cd02570">
    <property type="entry name" value="PseudoU_synth_EcTruA"/>
    <property type="match status" value="1"/>
</dbReference>
<dbReference type="FunFam" id="3.30.70.580:FF:000001">
    <property type="entry name" value="tRNA pseudouridine synthase A"/>
    <property type="match status" value="1"/>
</dbReference>
<dbReference type="Gene3D" id="3.30.70.660">
    <property type="entry name" value="Pseudouridine synthase I, catalytic domain, C-terminal subdomain"/>
    <property type="match status" value="1"/>
</dbReference>
<dbReference type="Gene3D" id="3.30.70.580">
    <property type="entry name" value="Pseudouridine synthase I, catalytic domain, N-terminal subdomain"/>
    <property type="match status" value="1"/>
</dbReference>
<dbReference type="HAMAP" id="MF_00171">
    <property type="entry name" value="TruA"/>
    <property type="match status" value="1"/>
</dbReference>
<dbReference type="InterPro" id="IPR020103">
    <property type="entry name" value="PsdUridine_synth_cat_dom_sf"/>
</dbReference>
<dbReference type="InterPro" id="IPR001406">
    <property type="entry name" value="PsdUridine_synth_TruA"/>
</dbReference>
<dbReference type="InterPro" id="IPR020097">
    <property type="entry name" value="PsdUridine_synth_TruA_a/b_dom"/>
</dbReference>
<dbReference type="InterPro" id="IPR020095">
    <property type="entry name" value="PsdUridine_synth_TruA_C"/>
</dbReference>
<dbReference type="InterPro" id="IPR020094">
    <property type="entry name" value="TruA/RsuA/RluB/E/F_N"/>
</dbReference>
<dbReference type="NCBIfam" id="TIGR00071">
    <property type="entry name" value="hisT_truA"/>
    <property type="match status" value="1"/>
</dbReference>
<dbReference type="PANTHER" id="PTHR11142">
    <property type="entry name" value="PSEUDOURIDYLATE SYNTHASE"/>
    <property type="match status" value="1"/>
</dbReference>
<dbReference type="PANTHER" id="PTHR11142:SF0">
    <property type="entry name" value="TRNA PSEUDOURIDINE SYNTHASE-LIKE 1"/>
    <property type="match status" value="1"/>
</dbReference>
<dbReference type="Pfam" id="PF01416">
    <property type="entry name" value="PseudoU_synth_1"/>
    <property type="match status" value="2"/>
</dbReference>
<dbReference type="PIRSF" id="PIRSF001430">
    <property type="entry name" value="tRNA_psdUrid_synth"/>
    <property type="match status" value="1"/>
</dbReference>
<dbReference type="SUPFAM" id="SSF55120">
    <property type="entry name" value="Pseudouridine synthase"/>
    <property type="match status" value="1"/>
</dbReference>
<accession>P60352</accession>
<proteinExistence type="inferred from homology"/>
<keyword id="KW-0413">Isomerase</keyword>
<keyword id="KW-0819">tRNA processing</keyword>
<reference key="1">
    <citation type="journal article" date="2004" name="Nat. Biotechnol.">
        <title>Complete genome sequence of the metabolically versatile photosynthetic bacterium Rhodopseudomonas palustris.</title>
        <authorList>
            <person name="Larimer F.W."/>
            <person name="Chain P."/>
            <person name="Hauser L."/>
            <person name="Lamerdin J.E."/>
            <person name="Malfatti S."/>
            <person name="Do L."/>
            <person name="Land M.L."/>
            <person name="Pelletier D.A."/>
            <person name="Beatty J.T."/>
            <person name="Lang A.S."/>
            <person name="Tabita F.R."/>
            <person name="Gibson J.L."/>
            <person name="Hanson T.E."/>
            <person name="Bobst C."/>
            <person name="Torres y Torres J.L."/>
            <person name="Peres C."/>
            <person name="Harrison F.H."/>
            <person name="Gibson J."/>
            <person name="Harwood C.S."/>
        </authorList>
    </citation>
    <scope>NUCLEOTIDE SEQUENCE [LARGE SCALE GENOMIC DNA]</scope>
    <source>
        <strain>ATCC BAA-98 / CGA009</strain>
    </source>
</reference>
<gene>
    <name evidence="1" type="primary">truA</name>
    <name type="ordered locus">RPA0623</name>
</gene>
<feature type="chain" id="PRO_0000057439" description="tRNA pseudouridine synthase A">
    <location>
        <begin position="1"/>
        <end position="248"/>
    </location>
</feature>
<feature type="active site" description="Nucleophile" evidence="1">
    <location>
        <position position="55"/>
    </location>
</feature>
<feature type="binding site" evidence="1">
    <location>
        <position position="114"/>
    </location>
    <ligand>
        <name>substrate</name>
    </ligand>
</feature>
<protein>
    <recommendedName>
        <fullName evidence="1">tRNA pseudouridine synthase A</fullName>
        <ecNumber evidence="1">5.4.99.12</ecNumber>
    </recommendedName>
    <alternativeName>
        <fullName evidence="1">tRNA pseudouridine(38-40) synthase</fullName>
    </alternativeName>
    <alternativeName>
        <fullName evidence="1">tRNA pseudouridylate synthase I</fullName>
    </alternativeName>
    <alternativeName>
        <fullName evidence="1">tRNA-uridine isomerase I</fullName>
    </alternativeName>
</protein>
<evidence type="ECO:0000255" key="1">
    <source>
        <dbReference type="HAMAP-Rule" id="MF_00171"/>
    </source>
</evidence>
<name>TRUA_RHOPA</name>
<comment type="function">
    <text evidence="1">Formation of pseudouridine at positions 38, 39 and 40 in the anticodon stem and loop of transfer RNAs.</text>
</comment>
<comment type="catalytic activity">
    <reaction evidence="1">
        <text>uridine(38/39/40) in tRNA = pseudouridine(38/39/40) in tRNA</text>
        <dbReference type="Rhea" id="RHEA:22376"/>
        <dbReference type="Rhea" id="RHEA-COMP:10085"/>
        <dbReference type="Rhea" id="RHEA-COMP:10087"/>
        <dbReference type="ChEBI" id="CHEBI:65314"/>
        <dbReference type="ChEBI" id="CHEBI:65315"/>
        <dbReference type="EC" id="5.4.99.12"/>
    </reaction>
</comment>
<comment type="subunit">
    <text evidence="1">Homodimer.</text>
</comment>
<comment type="similarity">
    <text evidence="1">Belongs to the tRNA pseudouridine synthase TruA family.</text>
</comment>